<reference key="1">
    <citation type="journal article" date="2002" name="J. Bacteriol.">
        <title>Whole-genome comparison of Mycobacterium tuberculosis clinical and laboratory strains.</title>
        <authorList>
            <person name="Fleischmann R.D."/>
            <person name="Alland D."/>
            <person name="Eisen J.A."/>
            <person name="Carpenter L."/>
            <person name="White O."/>
            <person name="Peterson J.D."/>
            <person name="DeBoy R.T."/>
            <person name="Dodson R.J."/>
            <person name="Gwinn M.L."/>
            <person name="Haft D.H."/>
            <person name="Hickey E.K."/>
            <person name="Kolonay J.F."/>
            <person name="Nelson W.C."/>
            <person name="Umayam L.A."/>
            <person name="Ermolaeva M.D."/>
            <person name="Salzberg S.L."/>
            <person name="Delcher A."/>
            <person name="Utterback T.R."/>
            <person name="Weidman J.F."/>
            <person name="Khouri H.M."/>
            <person name="Gill J."/>
            <person name="Mikula A."/>
            <person name="Bishai W."/>
            <person name="Jacobs W.R. Jr."/>
            <person name="Venter J.C."/>
            <person name="Fraser C.M."/>
        </authorList>
    </citation>
    <scope>NUCLEOTIDE SEQUENCE [LARGE SCALE GENOMIC DNA]</scope>
    <source>
        <strain>CDC 1551 / Oshkosh</strain>
    </source>
</reference>
<evidence type="ECO:0000255" key="1">
    <source>
        <dbReference type="HAMAP-Rule" id="MF_00572"/>
    </source>
</evidence>
<evidence type="ECO:0000256" key="2">
    <source>
        <dbReference type="SAM" id="MobiDB-lite"/>
    </source>
</evidence>
<evidence type="ECO:0000269" key="3">
    <source>
    </source>
</evidence>
<evidence type="ECO:0000305" key="4"/>
<gene>
    <name evidence="1" type="primary">leuA</name>
    <name type="ordered locus">MT3813</name>
</gene>
<protein>
    <recommendedName>
        <fullName evidence="1">2-isopropylmalate synthase</fullName>
        <ecNumber evidence="1">2.3.3.13</ecNumber>
    </recommendedName>
    <alternativeName>
        <fullName evidence="1">Alpha-IPM synthase</fullName>
    </alternativeName>
    <alternativeName>
        <fullName evidence="1">Alpha-isopropylmalate synthase</fullName>
    </alternativeName>
</protein>
<comment type="function">
    <text evidence="1">Catalyzes the condensation of the acetyl group of acetyl-CoA with 3-methyl-2-oxobutanoate (2-ketoisovalerate) to form 3-carboxy-3-hydroxy-4-methylpentanoate (2-isopropylmalate).</text>
</comment>
<comment type="catalytic activity">
    <reaction evidence="1">
        <text>3-methyl-2-oxobutanoate + acetyl-CoA + H2O = (2S)-2-isopropylmalate + CoA + H(+)</text>
        <dbReference type="Rhea" id="RHEA:21524"/>
        <dbReference type="ChEBI" id="CHEBI:1178"/>
        <dbReference type="ChEBI" id="CHEBI:11851"/>
        <dbReference type="ChEBI" id="CHEBI:15377"/>
        <dbReference type="ChEBI" id="CHEBI:15378"/>
        <dbReference type="ChEBI" id="CHEBI:57287"/>
        <dbReference type="ChEBI" id="CHEBI:57288"/>
        <dbReference type="EC" id="2.3.3.13"/>
    </reaction>
</comment>
<comment type="cofactor">
    <cofactor evidence="1">
        <name>Mg(2+)</name>
        <dbReference type="ChEBI" id="CHEBI:18420"/>
    </cofactor>
</comment>
<comment type="pathway">
    <text evidence="1">Amino-acid biosynthesis; L-leucine biosynthesis; L-leucine from 3-methyl-2-oxobutanoate: step 1/4.</text>
</comment>
<comment type="subunit">
    <text evidence="1">Homodimer.</text>
</comment>
<comment type="subcellular location">
    <subcellularLocation>
        <location evidence="1">Cytoplasm</location>
    </subcellularLocation>
</comment>
<comment type="miscellaneous">
    <text evidence="3">In M.tuberculosis this gene has a variable number tandem repeat (VNTR); in CDC 1551 / Oshkosh there are 2 repeats, other strains can have up to 6 repeats.</text>
</comment>
<comment type="similarity">
    <text evidence="1">Belongs to the alpha-IPM synthase/homocitrate synthase family. LeuA type 2 subfamily.</text>
</comment>
<comment type="sequence caution" evidence="4">
    <conflict type="erroneous initiation">
        <sequence resource="EMBL-CDS" id="AAK48181"/>
    </conflict>
    <text>Extended N-terminus.</text>
</comment>
<proteinExistence type="inferred from homology"/>
<feature type="chain" id="PRO_0000426806" description="2-isopropylmalate synthase">
    <location>
        <begin position="1"/>
        <end position="644"/>
    </location>
</feature>
<feature type="domain" description="Pyruvate carboxyltransferase" evidence="1">
    <location>
        <begin position="72"/>
        <end position="346"/>
    </location>
</feature>
<feature type="repeat" description="VNTR1" evidence="3">
    <location>
        <begin position="575"/>
        <end position="593"/>
    </location>
</feature>
<feature type="repeat" description="VNTR2" evidence="3">
    <location>
        <begin position="594"/>
        <end position="612"/>
    </location>
</feature>
<feature type="region of interest" description="Disordered" evidence="2">
    <location>
        <begin position="1"/>
        <end position="40"/>
    </location>
</feature>
<feature type="region of interest" description="Regulatory domain" evidence="1">
    <location>
        <begin position="491"/>
        <end position="644"/>
    </location>
</feature>
<feature type="region of interest" description="Disordered" evidence="2">
    <location>
        <begin position="581"/>
        <end position="612"/>
    </location>
</feature>
<feature type="compositionally biased region" description="Polar residues" evidence="2">
    <location>
        <begin position="31"/>
        <end position="40"/>
    </location>
</feature>
<feature type="binding site" evidence="1">
    <location>
        <position position="81"/>
    </location>
    <ligand>
        <name>Mg(2+)</name>
        <dbReference type="ChEBI" id="CHEBI:18420"/>
    </ligand>
</feature>
<feature type="binding site" evidence="1">
    <location>
        <position position="285"/>
    </location>
    <ligand>
        <name>Mg(2+)</name>
        <dbReference type="ChEBI" id="CHEBI:18420"/>
    </ligand>
</feature>
<feature type="binding site" evidence="1">
    <location>
        <position position="287"/>
    </location>
    <ligand>
        <name>Mg(2+)</name>
        <dbReference type="ChEBI" id="CHEBI:18420"/>
    </ligand>
</feature>
<feature type="binding site" evidence="1">
    <location>
        <position position="321"/>
    </location>
    <ligand>
        <name>Mg(2+)</name>
        <dbReference type="ChEBI" id="CHEBI:18420"/>
    </ligand>
</feature>
<dbReference type="EC" id="2.3.3.13" evidence="1"/>
<dbReference type="EMBL" id="AE000516">
    <property type="protein sequence ID" value="AAK48181.1"/>
    <property type="status" value="ALT_INIT"/>
    <property type="molecule type" value="Genomic_DNA"/>
</dbReference>
<dbReference type="PIR" id="G70794">
    <property type="entry name" value="G70794"/>
</dbReference>
<dbReference type="RefSeq" id="WP_003902547.1">
    <property type="nucleotide sequence ID" value="NZ_KK341227.1"/>
</dbReference>
<dbReference type="SMR" id="P9WQB2"/>
<dbReference type="KEGG" id="mtc:MT3813"/>
<dbReference type="PATRIC" id="fig|83331.31.peg.4106"/>
<dbReference type="HOGENOM" id="CLU_004588_3_2_11"/>
<dbReference type="UniPathway" id="UPA00048">
    <property type="reaction ID" value="UER00070"/>
</dbReference>
<dbReference type="Proteomes" id="UP000001020">
    <property type="component" value="Chromosome"/>
</dbReference>
<dbReference type="GO" id="GO:0005737">
    <property type="term" value="C:cytoplasm"/>
    <property type="evidence" value="ECO:0007669"/>
    <property type="project" value="UniProtKB-SubCell"/>
</dbReference>
<dbReference type="GO" id="GO:0003852">
    <property type="term" value="F:2-isopropylmalate synthase activity"/>
    <property type="evidence" value="ECO:0007669"/>
    <property type="project" value="UniProtKB-UniRule"/>
</dbReference>
<dbReference type="GO" id="GO:0003985">
    <property type="term" value="F:acetyl-CoA C-acetyltransferase activity"/>
    <property type="evidence" value="ECO:0007669"/>
    <property type="project" value="UniProtKB-UniRule"/>
</dbReference>
<dbReference type="GO" id="GO:0000287">
    <property type="term" value="F:magnesium ion binding"/>
    <property type="evidence" value="ECO:0007669"/>
    <property type="project" value="UniProtKB-UniRule"/>
</dbReference>
<dbReference type="GO" id="GO:0009098">
    <property type="term" value="P:L-leucine biosynthetic process"/>
    <property type="evidence" value="ECO:0007669"/>
    <property type="project" value="UniProtKB-UniRule"/>
</dbReference>
<dbReference type="CDD" id="cd07942">
    <property type="entry name" value="DRE_TIM_LeuA"/>
    <property type="match status" value="1"/>
</dbReference>
<dbReference type="FunFam" id="3.20.20.70:FF:000045">
    <property type="entry name" value="2-isopropylmalate synthase"/>
    <property type="match status" value="1"/>
</dbReference>
<dbReference type="Gene3D" id="3.30.160.270">
    <property type="match status" value="1"/>
</dbReference>
<dbReference type="Gene3D" id="3.20.20.70">
    <property type="entry name" value="Aldolase class I"/>
    <property type="match status" value="1"/>
</dbReference>
<dbReference type="HAMAP" id="MF_00572">
    <property type="entry name" value="LeuA_type2"/>
    <property type="match status" value="1"/>
</dbReference>
<dbReference type="InterPro" id="IPR013709">
    <property type="entry name" value="2-isopropylmalate_synth_dimer"/>
</dbReference>
<dbReference type="InterPro" id="IPR002034">
    <property type="entry name" value="AIPM/Hcit_synth_CS"/>
</dbReference>
<dbReference type="InterPro" id="IPR013785">
    <property type="entry name" value="Aldolase_TIM"/>
</dbReference>
<dbReference type="InterPro" id="IPR005668">
    <property type="entry name" value="IPM_Synthase"/>
</dbReference>
<dbReference type="InterPro" id="IPR054692">
    <property type="entry name" value="LeuA-like_post-cat"/>
</dbReference>
<dbReference type="InterPro" id="IPR036230">
    <property type="entry name" value="LeuA_allosteric_dom_sf"/>
</dbReference>
<dbReference type="InterPro" id="IPR039371">
    <property type="entry name" value="LeuA_N_DRE-TIM"/>
</dbReference>
<dbReference type="InterPro" id="IPR000891">
    <property type="entry name" value="PYR_CT"/>
</dbReference>
<dbReference type="NCBIfam" id="TIGR00970">
    <property type="entry name" value="leuA_yeast"/>
    <property type="match status" value="1"/>
</dbReference>
<dbReference type="NCBIfam" id="NF002991">
    <property type="entry name" value="PRK03739.1"/>
    <property type="match status" value="1"/>
</dbReference>
<dbReference type="PANTHER" id="PTHR46911">
    <property type="match status" value="1"/>
</dbReference>
<dbReference type="PANTHER" id="PTHR46911:SF1">
    <property type="entry name" value="2-ISOPROPYLMALATE SYNTHASE"/>
    <property type="match status" value="1"/>
</dbReference>
<dbReference type="Pfam" id="PF00682">
    <property type="entry name" value="HMGL-like"/>
    <property type="match status" value="1"/>
</dbReference>
<dbReference type="Pfam" id="PF22615">
    <property type="entry name" value="IPMS_D2"/>
    <property type="match status" value="1"/>
</dbReference>
<dbReference type="Pfam" id="PF08502">
    <property type="entry name" value="LeuA_dimer"/>
    <property type="match status" value="1"/>
</dbReference>
<dbReference type="SMART" id="SM00917">
    <property type="entry name" value="LeuA_dimer"/>
    <property type="match status" value="1"/>
</dbReference>
<dbReference type="SUPFAM" id="SSF110921">
    <property type="entry name" value="2-isopropylmalate synthase LeuA, allosteric (dimerisation) domain"/>
    <property type="match status" value="1"/>
</dbReference>
<dbReference type="SUPFAM" id="SSF51569">
    <property type="entry name" value="Aldolase"/>
    <property type="match status" value="1"/>
</dbReference>
<dbReference type="SUPFAM" id="SSF89000">
    <property type="entry name" value="post-HMGL domain-like"/>
    <property type="match status" value="1"/>
</dbReference>
<dbReference type="PROSITE" id="PS00815">
    <property type="entry name" value="AIPM_HOMOCIT_SYNTH_1"/>
    <property type="match status" value="1"/>
</dbReference>
<dbReference type="PROSITE" id="PS00816">
    <property type="entry name" value="AIPM_HOMOCIT_SYNTH_2"/>
    <property type="match status" value="1"/>
</dbReference>
<dbReference type="PROSITE" id="PS50991">
    <property type="entry name" value="PYR_CT"/>
    <property type="match status" value="1"/>
</dbReference>
<organism>
    <name type="scientific">Mycobacterium tuberculosis (strain CDC 1551 / Oshkosh)</name>
    <dbReference type="NCBI Taxonomy" id="83331"/>
    <lineage>
        <taxon>Bacteria</taxon>
        <taxon>Bacillati</taxon>
        <taxon>Actinomycetota</taxon>
        <taxon>Actinomycetes</taxon>
        <taxon>Mycobacteriales</taxon>
        <taxon>Mycobacteriaceae</taxon>
        <taxon>Mycobacterium</taxon>
        <taxon>Mycobacterium tuberculosis complex</taxon>
    </lineage>
</organism>
<accession>P9WQB2</accession>
<accession>L0TGA3</accession>
<accession>O69677</accession>
<accession>P96420</accession>
<sequence>MTTSESPDAYTESFGAHTIVKPAGPPRVGQPSWNPQRASSMPVNRYRPFAEEVEPIRLRNRTWPDRVIDRAPLWCAVDLRDGNQALIDPMSPARKRRMFDLLVRMGYKEIEVGFPSASQTDFDFVREIIEQGAIPDDVTIQVLTQCRPELIERTFQACSGAPRAIVHFYNSTSILQRRVVFRANRAEVQAIATDGARKCVEQAAKYPGTQWRFEYSPESYTGTELEYAKQVCDAVGEVIAPTPERPIIFNLPATVEMTTPNVYADSIEWMSRNLANRESVILSLHPHNDRGTAVAAAELGFAAGADRIEGCLFGNGERTGNVCLVTLGLNLFSRGVDPQIDFSNIDEIRRTVEYCNQLPVHERHPYGGDLVYTAFSGSHQDAINKGLDAMKLDADAADCDVDDMLWQVPYLPIDPRDVGRTYEAVIRVNSQSGKGGVAYIMKTDHGLSLPRRLQIEFSQVIQKIAEGTAGEGGEVSPKEMWDAFAEEYLAPVRPLERIRQHVDAADDDGGTTSITATVKINGVETEISGSGNGPLAAFVHALADVGFDVAVLDYYEHAMSAGDDAQAAAYVEASVTIASPAQPGEAGRHASDPVTIASPAQPGEAGRHASDPVTSKTVWGVGIAPSITTASLRAVVSAVNRAAR</sequence>
<name>LEU1_MYCTO</name>
<keyword id="KW-0028">Amino-acid biosynthesis</keyword>
<keyword id="KW-0100">Branched-chain amino acid biosynthesis</keyword>
<keyword id="KW-0963">Cytoplasm</keyword>
<keyword id="KW-0432">Leucine biosynthesis</keyword>
<keyword id="KW-0460">Magnesium</keyword>
<keyword id="KW-0479">Metal-binding</keyword>
<keyword id="KW-1185">Reference proteome</keyword>
<keyword id="KW-0677">Repeat</keyword>
<keyword id="KW-0808">Transferase</keyword>